<evidence type="ECO:0000250" key="1">
    <source>
        <dbReference type="UniProtKB" id="P0AG80"/>
    </source>
</evidence>
<evidence type="ECO:0000255" key="2"/>
<evidence type="ECO:0000305" key="3"/>
<proteinExistence type="inferred from homology"/>
<organism>
    <name type="scientific">Escherichia coli (strain UTI89 / UPEC)</name>
    <dbReference type="NCBI Taxonomy" id="364106"/>
    <lineage>
        <taxon>Bacteria</taxon>
        <taxon>Pseudomonadati</taxon>
        <taxon>Pseudomonadota</taxon>
        <taxon>Gammaproteobacteria</taxon>
        <taxon>Enterobacterales</taxon>
        <taxon>Enterobacteriaceae</taxon>
        <taxon>Escherichia</taxon>
    </lineage>
</organism>
<protein>
    <recommendedName>
        <fullName evidence="1">sn-glycerol-3-phosphate-binding periplasmic protein UgpB</fullName>
    </recommendedName>
</protein>
<gene>
    <name type="primary">ugpB</name>
    <name type="ordered locus">UTI89_C3960</name>
</gene>
<comment type="function">
    <text evidence="1">Part of the ABC transporter complex UgpBAEC involved in sn-glycerol-3-phosphate (G3P) import. Binds G3P.</text>
</comment>
<comment type="subunit">
    <text evidence="1">The complex is composed of two ATP-binding proteins (UgpC), two transmembrane proteins (UgpA and UgpE) and a solute-binding protein (UgpB).</text>
</comment>
<comment type="subcellular location">
    <subcellularLocation>
        <location evidence="1">Periplasm</location>
    </subcellularLocation>
</comment>
<comment type="similarity">
    <text evidence="3">Belongs to the bacterial solute-binding protein 1 family.</text>
</comment>
<feature type="signal peptide" evidence="2">
    <location>
        <begin position="1"/>
        <end position="23"/>
    </location>
</feature>
<feature type="chain" id="PRO_0000292811" description="sn-glycerol-3-phosphate-binding periplasmic protein UgpB">
    <location>
        <begin position="24"/>
        <end position="438"/>
    </location>
</feature>
<feature type="binding site" evidence="1">
    <location>
        <position position="65"/>
    </location>
    <ligand>
        <name>sn-glycerol 3-phosphate</name>
        <dbReference type="ChEBI" id="CHEBI:57597"/>
    </ligand>
</feature>
<feature type="binding site" evidence="1">
    <location>
        <position position="89"/>
    </location>
    <ligand>
        <name>sn-glycerol 3-phosphate</name>
        <dbReference type="ChEBI" id="CHEBI:57597"/>
    </ligand>
</feature>
<feature type="binding site" evidence="1">
    <location>
        <position position="144"/>
    </location>
    <ligand>
        <name>sn-glycerol 3-phosphate</name>
        <dbReference type="ChEBI" id="CHEBI:57597"/>
    </ligand>
</feature>
<feature type="binding site" evidence="1">
    <location>
        <position position="270"/>
    </location>
    <ligand>
        <name>sn-glycerol 3-phosphate</name>
        <dbReference type="ChEBI" id="CHEBI:57597"/>
    </ligand>
</feature>
<feature type="binding site" evidence="1">
    <location>
        <position position="307"/>
    </location>
    <ligand>
        <name>sn-glycerol 3-phosphate</name>
        <dbReference type="ChEBI" id="CHEBI:57597"/>
    </ligand>
</feature>
<feature type="binding site" evidence="1">
    <location>
        <position position="346"/>
    </location>
    <ligand>
        <name>sn-glycerol 3-phosphate</name>
        <dbReference type="ChEBI" id="CHEBI:57597"/>
    </ligand>
</feature>
<feature type="binding site" evidence="1">
    <location>
        <position position="397"/>
    </location>
    <ligand>
        <name>sn-glycerol 3-phosphate</name>
        <dbReference type="ChEBI" id="CHEBI:57597"/>
    </ligand>
</feature>
<accession>Q1R5H5</accession>
<reference key="1">
    <citation type="journal article" date="2006" name="Proc. Natl. Acad. Sci. U.S.A.">
        <title>Identification of genes subject to positive selection in uropathogenic strains of Escherichia coli: a comparative genomics approach.</title>
        <authorList>
            <person name="Chen S.L."/>
            <person name="Hung C.-S."/>
            <person name="Xu J."/>
            <person name="Reigstad C.S."/>
            <person name="Magrini V."/>
            <person name="Sabo A."/>
            <person name="Blasiar D."/>
            <person name="Bieri T."/>
            <person name="Meyer R.R."/>
            <person name="Ozersky P."/>
            <person name="Armstrong J.R."/>
            <person name="Fulton R.S."/>
            <person name="Latreille J.P."/>
            <person name="Spieth J."/>
            <person name="Hooton T.M."/>
            <person name="Mardis E.R."/>
            <person name="Hultgren S.J."/>
            <person name="Gordon J.I."/>
        </authorList>
    </citation>
    <scope>NUCLEOTIDE SEQUENCE [LARGE SCALE GENOMIC DNA]</scope>
    <source>
        <strain>UTI89 / UPEC</strain>
    </source>
</reference>
<keyword id="KW-0574">Periplasm</keyword>
<keyword id="KW-0732">Signal</keyword>
<keyword id="KW-0813">Transport</keyword>
<dbReference type="EMBL" id="CP000243">
    <property type="protein sequence ID" value="ABE09389.1"/>
    <property type="molecule type" value="Genomic_DNA"/>
</dbReference>
<dbReference type="RefSeq" id="WP_000803580.1">
    <property type="nucleotide sequence ID" value="NZ_CP064825.1"/>
</dbReference>
<dbReference type="SMR" id="Q1R5H5"/>
<dbReference type="KEGG" id="eci:UTI89_C3960"/>
<dbReference type="HOGENOM" id="CLU_031285_3_0_6"/>
<dbReference type="Proteomes" id="UP000001952">
    <property type="component" value="Chromosome"/>
</dbReference>
<dbReference type="GO" id="GO:0030288">
    <property type="term" value="C:outer membrane-bounded periplasmic space"/>
    <property type="evidence" value="ECO:0007669"/>
    <property type="project" value="UniProtKB-ARBA"/>
</dbReference>
<dbReference type="GO" id="GO:0055085">
    <property type="term" value="P:transmembrane transport"/>
    <property type="evidence" value="ECO:0007669"/>
    <property type="project" value="InterPro"/>
</dbReference>
<dbReference type="CDD" id="cd14748">
    <property type="entry name" value="PBP2_UgpB"/>
    <property type="match status" value="1"/>
</dbReference>
<dbReference type="Gene3D" id="3.40.190.10">
    <property type="entry name" value="Periplasmic binding protein-like II"/>
    <property type="match status" value="2"/>
</dbReference>
<dbReference type="InterPro" id="IPR050490">
    <property type="entry name" value="Bact_solute-bd_prot1"/>
</dbReference>
<dbReference type="InterPro" id="IPR006059">
    <property type="entry name" value="SBP"/>
</dbReference>
<dbReference type="InterPro" id="IPR006061">
    <property type="entry name" value="SBP_1_CS"/>
</dbReference>
<dbReference type="NCBIfam" id="NF008211">
    <property type="entry name" value="PRK10974.1"/>
    <property type="match status" value="1"/>
</dbReference>
<dbReference type="PANTHER" id="PTHR43649">
    <property type="entry name" value="ARABINOSE-BINDING PROTEIN-RELATED"/>
    <property type="match status" value="1"/>
</dbReference>
<dbReference type="PANTHER" id="PTHR43649:SF31">
    <property type="entry name" value="SN-GLYCEROL-3-PHOSPHATE-BINDING PERIPLASMIC PROTEIN UGPB"/>
    <property type="match status" value="1"/>
</dbReference>
<dbReference type="Pfam" id="PF13416">
    <property type="entry name" value="SBP_bac_8"/>
    <property type="match status" value="1"/>
</dbReference>
<dbReference type="SUPFAM" id="SSF53850">
    <property type="entry name" value="Periplasmic binding protein-like II"/>
    <property type="match status" value="1"/>
</dbReference>
<dbReference type="PROSITE" id="PS01037">
    <property type="entry name" value="SBP_BACTERIAL_1"/>
    <property type="match status" value="1"/>
</dbReference>
<sequence length="438" mass="48494">MKPLRYTASALALGLALMANAQAVTTIPFWHSMEGELGKEVDSLAQRFNAENPDYKIVPTYKGNYEQNLSAGIAAFRTGNAPAILQVYEVGTATMMASKAIKPVYDVFKEAGIQFDESQFVPTVSGYYSDSKTGHLLSQPFNSSTPVLYYNKDAFKKAGLDPEQPPKTWQDLADYAAKLKASGMKCGYASGWQGWIQLENFSAWNGLPFASKNNGFDGTDAVLEFNKPEQVKHIAMLEEMNKKGDFSYVGRKDESTEKFYNGDCAMTTASSGSLANIREYAKFNYGVGMMPYDADAKDAPQNAIIGGASLWVMQGKDKETYTGVAKFLDFLAKPENAAEWHQKTGYLPITKAAYDLTREQGFYEKNPGADIATRQMLNKPPLPFTKGLRLGNMPQIRVIVDEELESVWTGKKTPQQALDTAVERGNQLLRRFEKSTKS</sequence>
<name>UGPB_ECOUT</name>